<protein>
    <recommendedName>
        <fullName evidence="1">Photosystem II reaction center protein L</fullName>
        <shortName evidence="1">PSII-L</shortName>
    </recommendedName>
</protein>
<organism>
    <name type="scientific">Allium textile</name>
    <name type="common">Textile onion</name>
    <name type="synonym">Allium reticulatum</name>
    <dbReference type="NCBI Taxonomy" id="207935"/>
    <lineage>
        <taxon>Eukaryota</taxon>
        <taxon>Viridiplantae</taxon>
        <taxon>Streptophyta</taxon>
        <taxon>Embryophyta</taxon>
        <taxon>Tracheophyta</taxon>
        <taxon>Spermatophyta</taxon>
        <taxon>Magnoliopsida</taxon>
        <taxon>Liliopsida</taxon>
        <taxon>Asparagales</taxon>
        <taxon>Amaryllidaceae</taxon>
        <taxon>Allioideae</taxon>
        <taxon>Allieae</taxon>
        <taxon>Allium</taxon>
    </lineage>
</organism>
<accession>Q67HC0</accession>
<gene>
    <name evidence="1" type="primary">psbL</name>
</gene>
<proteinExistence type="inferred from homology"/>
<feature type="chain" id="PRO_0000219674" description="Photosystem II reaction center protein L">
    <location>
        <begin position="1"/>
        <end position="38"/>
    </location>
</feature>
<feature type="transmembrane region" description="Helical" evidence="1">
    <location>
        <begin position="17"/>
        <end position="37"/>
    </location>
</feature>
<sequence>MTQSNPNEQNVELNRTSLYWGLLLIXVLAVLFSNYFFN</sequence>
<evidence type="ECO:0000255" key="1">
    <source>
        <dbReference type="HAMAP-Rule" id="MF_01317"/>
    </source>
</evidence>
<dbReference type="EMBL" id="AY147583">
    <property type="protein sequence ID" value="AAN32434.1"/>
    <property type="molecule type" value="Genomic_DNA"/>
</dbReference>
<dbReference type="GO" id="GO:0009535">
    <property type="term" value="C:chloroplast thylakoid membrane"/>
    <property type="evidence" value="ECO:0007669"/>
    <property type="project" value="UniProtKB-SubCell"/>
</dbReference>
<dbReference type="GO" id="GO:0009539">
    <property type="term" value="C:photosystem II reaction center"/>
    <property type="evidence" value="ECO:0007669"/>
    <property type="project" value="InterPro"/>
</dbReference>
<dbReference type="GO" id="GO:0015979">
    <property type="term" value="P:photosynthesis"/>
    <property type="evidence" value="ECO:0007669"/>
    <property type="project" value="UniProtKB-UniRule"/>
</dbReference>
<dbReference type="HAMAP" id="MF_01317">
    <property type="entry name" value="PSII_PsbL"/>
    <property type="match status" value="1"/>
</dbReference>
<dbReference type="InterPro" id="IPR003372">
    <property type="entry name" value="PSII_PsbL"/>
</dbReference>
<dbReference type="InterPro" id="IPR037266">
    <property type="entry name" value="PSII_PsbL_sf"/>
</dbReference>
<dbReference type="Pfam" id="PF02419">
    <property type="entry name" value="PsbL"/>
    <property type="match status" value="1"/>
</dbReference>
<dbReference type="SUPFAM" id="SSF161017">
    <property type="entry name" value="Photosystem II reaction center protein L, PsbL"/>
    <property type="match status" value="1"/>
</dbReference>
<keyword id="KW-0150">Chloroplast</keyword>
<keyword id="KW-0472">Membrane</keyword>
<keyword id="KW-0602">Photosynthesis</keyword>
<keyword id="KW-0604">Photosystem II</keyword>
<keyword id="KW-0934">Plastid</keyword>
<keyword id="KW-0674">Reaction center</keyword>
<keyword id="KW-0793">Thylakoid</keyword>
<keyword id="KW-0812">Transmembrane</keyword>
<keyword id="KW-1133">Transmembrane helix</keyword>
<comment type="function">
    <text evidence="1">One of the components of the core complex of photosystem II (PSII). PSII is a light-driven water:plastoquinone oxidoreductase that uses light energy to abstract electrons from H(2)O, generating O(2) and a proton gradient subsequently used for ATP formation. It consists of a core antenna complex that captures photons, and an electron transfer chain that converts photonic excitation into a charge separation. This subunit is found at the monomer-monomer interface and is required for correct PSII assembly and/or dimerization.</text>
</comment>
<comment type="subunit">
    <text evidence="1">PSII is composed of 1 copy each of membrane proteins PsbA, PsbB, PsbC, PsbD, PsbE, PsbF, PsbH, PsbI, PsbJ, PsbK, PsbL, PsbM, PsbT, PsbX, PsbY, PsbZ, Psb30/Ycf12, at least 3 peripheral proteins of the oxygen-evolving complex and a large number of cofactors. It forms dimeric complexes.</text>
</comment>
<comment type="subcellular location">
    <subcellularLocation>
        <location evidence="1">Plastid</location>
        <location evidence="1">Chloroplast thylakoid membrane</location>
        <topology evidence="1">Single-pass membrane protein</topology>
    </subcellularLocation>
</comment>
<comment type="similarity">
    <text evidence="1">Belongs to the PsbL family.</text>
</comment>
<reference key="1">
    <citation type="submission" date="2002-09" db="EMBL/GenBank/DDBJ databases">
        <title>Phylogenetic relationships among the major lineages of Asparagales based on a large chloroplast data set.</title>
        <authorList>
            <person name="McPherson M.A."/>
            <person name="Rai H.S."/>
            <person name="Wong W.A."/>
            <person name="Graham S.W."/>
        </authorList>
    </citation>
    <scope>NUCLEOTIDE SEQUENCE [GENOMIC DNA]</scope>
</reference>
<name>PSBL_ALLTE</name>
<geneLocation type="chloroplast"/>